<proteinExistence type="inferred from homology"/>
<gene>
    <name evidence="1" type="primary">leuC</name>
    <name type="ordered locus">ECP_0074</name>
</gene>
<accession>Q0TLR7</accession>
<protein>
    <recommendedName>
        <fullName evidence="1">3-isopropylmalate dehydratase large subunit</fullName>
        <ecNumber evidence="1">4.2.1.33</ecNumber>
    </recommendedName>
    <alternativeName>
        <fullName evidence="1">Alpha-IPM isomerase</fullName>
        <shortName evidence="1">IPMI</shortName>
    </alternativeName>
    <alternativeName>
        <fullName evidence="1">Isopropylmalate isomerase</fullName>
    </alternativeName>
</protein>
<sequence>MAKTLYEKLFDAHVVYEAENETPLLYIDRHLVHEVTSPQAFDGLRAHGRPVRQPGKTFATMDHNVSTQTKDINACGEMARIQMQELIKNCKEFGVELYDLNHPYQGIVHVMGPEQGVTLPGMTIVCGDSHTATHGAFGALAFGIGTSEVEHVLATQTLKQGRAKTMKIEVQGKAAPGITAKDIVLAIIGKTGSAGGTGHVVEFCGEAIRDLSMEGRMTLCNMAIEMGAKAGLVAPDETTFNYVKGRLHAPKGKDFDDAVAYWKTLQTDEGATFDTVVTLQAEEISPQVTWGTNPGQVISVNDNIPDPASFADPVERASAEKALAYMGLKPGIPLTEVAIDKVFIGSCTNSRIEDLRAAAEIAKGRKVAPGVQALVVPGSGPVKAQAEAEGLDKIFIEAGFEWRLPGCSMCLAMNNDRLNPGERCASTSNRNFEGRQGRGGRTHLVSPAMAAAAAVTGHFADIRNIK</sequence>
<comment type="function">
    <text evidence="1">Catalyzes the isomerization between 2-isopropylmalate and 3-isopropylmalate, via the formation of 2-isopropylmaleate.</text>
</comment>
<comment type="catalytic activity">
    <reaction evidence="1">
        <text>(2R,3S)-3-isopropylmalate = (2S)-2-isopropylmalate</text>
        <dbReference type="Rhea" id="RHEA:32287"/>
        <dbReference type="ChEBI" id="CHEBI:1178"/>
        <dbReference type="ChEBI" id="CHEBI:35121"/>
        <dbReference type="EC" id="4.2.1.33"/>
    </reaction>
</comment>
<comment type="cofactor">
    <cofactor evidence="1">
        <name>[4Fe-4S] cluster</name>
        <dbReference type="ChEBI" id="CHEBI:49883"/>
    </cofactor>
    <text evidence="1">Binds 1 [4Fe-4S] cluster per subunit.</text>
</comment>
<comment type="pathway">
    <text evidence="1">Amino-acid biosynthesis; L-leucine biosynthesis; L-leucine from 3-methyl-2-oxobutanoate: step 2/4.</text>
</comment>
<comment type="subunit">
    <text evidence="1">Heterodimer of LeuC and LeuD.</text>
</comment>
<comment type="similarity">
    <text evidence="1">Belongs to the aconitase/IPM isomerase family. LeuC type 1 subfamily.</text>
</comment>
<organism>
    <name type="scientific">Escherichia coli O6:K15:H31 (strain 536 / UPEC)</name>
    <dbReference type="NCBI Taxonomy" id="362663"/>
    <lineage>
        <taxon>Bacteria</taxon>
        <taxon>Pseudomonadati</taxon>
        <taxon>Pseudomonadota</taxon>
        <taxon>Gammaproteobacteria</taxon>
        <taxon>Enterobacterales</taxon>
        <taxon>Enterobacteriaceae</taxon>
        <taxon>Escherichia</taxon>
    </lineage>
</organism>
<feature type="chain" id="PRO_1000063551" description="3-isopropylmalate dehydratase large subunit">
    <location>
        <begin position="1"/>
        <end position="466"/>
    </location>
</feature>
<feature type="binding site" evidence="1">
    <location>
        <position position="347"/>
    </location>
    <ligand>
        <name>[4Fe-4S] cluster</name>
        <dbReference type="ChEBI" id="CHEBI:49883"/>
    </ligand>
</feature>
<feature type="binding site" evidence="1">
    <location>
        <position position="407"/>
    </location>
    <ligand>
        <name>[4Fe-4S] cluster</name>
        <dbReference type="ChEBI" id="CHEBI:49883"/>
    </ligand>
</feature>
<feature type="binding site" evidence="1">
    <location>
        <position position="410"/>
    </location>
    <ligand>
        <name>[4Fe-4S] cluster</name>
        <dbReference type="ChEBI" id="CHEBI:49883"/>
    </ligand>
</feature>
<keyword id="KW-0004">4Fe-4S</keyword>
<keyword id="KW-0028">Amino-acid biosynthesis</keyword>
<keyword id="KW-0100">Branched-chain amino acid biosynthesis</keyword>
<keyword id="KW-0408">Iron</keyword>
<keyword id="KW-0411">Iron-sulfur</keyword>
<keyword id="KW-0432">Leucine biosynthesis</keyword>
<keyword id="KW-0456">Lyase</keyword>
<keyword id="KW-0479">Metal-binding</keyword>
<dbReference type="EC" id="4.2.1.33" evidence="1"/>
<dbReference type="EMBL" id="CP000247">
    <property type="protein sequence ID" value="ABG68114.1"/>
    <property type="molecule type" value="Genomic_DNA"/>
</dbReference>
<dbReference type="RefSeq" id="WP_001140652.1">
    <property type="nucleotide sequence ID" value="NC_008253.1"/>
</dbReference>
<dbReference type="SMR" id="Q0TLR7"/>
<dbReference type="GeneID" id="75202111"/>
<dbReference type="KEGG" id="ecp:ECP_0074"/>
<dbReference type="HOGENOM" id="CLU_006714_3_4_6"/>
<dbReference type="UniPathway" id="UPA00048">
    <property type="reaction ID" value="UER00071"/>
</dbReference>
<dbReference type="Proteomes" id="UP000009182">
    <property type="component" value="Chromosome"/>
</dbReference>
<dbReference type="GO" id="GO:0003861">
    <property type="term" value="F:3-isopropylmalate dehydratase activity"/>
    <property type="evidence" value="ECO:0007669"/>
    <property type="project" value="UniProtKB-UniRule"/>
</dbReference>
<dbReference type="GO" id="GO:0051539">
    <property type="term" value="F:4 iron, 4 sulfur cluster binding"/>
    <property type="evidence" value="ECO:0007669"/>
    <property type="project" value="UniProtKB-KW"/>
</dbReference>
<dbReference type="GO" id="GO:0046872">
    <property type="term" value="F:metal ion binding"/>
    <property type="evidence" value="ECO:0007669"/>
    <property type="project" value="UniProtKB-KW"/>
</dbReference>
<dbReference type="GO" id="GO:0009098">
    <property type="term" value="P:L-leucine biosynthetic process"/>
    <property type="evidence" value="ECO:0007669"/>
    <property type="project" value="UniProtKB-UniRule"/>
</dbReference>
<dbReference type="CDD" id="cd01583">
    <property type="entry name" value="IPMI"/>
    <property type="match status" value="1"/>
</dbReference>
<dbReference type="FunFam" id="3.30.499.10:FF:000006">
    <property type="entry name" value="3-isopropylmalate dehydratase large subunit"/>
    <property type="match status" value="1"/>
</dbReference>
<dbReference type="FunFam" id="3.30.499.10:FF:000007">
    <property type="entry name" value="3-isopropylmalate dehydratase large subunit"/>
    <property type="match status" value="1"/>
</dbReference>
<dbReference type="Gene3D" id="3.30.499.10">
    <property type="entry name" value="Aconitase, domain 3"/>
    <property type="match status" value="2"/>
</dbReference>
<dbReference type="HAMAP" id="MF_01026">
    <property type="entry name" value="LeuC_type1"/>
    <property type="match status" value="1"/>
</dbReference>
<dbReference type="InterPro" id="IPR004430">
    <property type="entry name" value="3-IsopropMal_deHydase_lsu"/>
</dbReference>
<dbReference type="InterPro" id="IPR015931">
    <property type="entry name" value="Acnase/IPM_dHydase_lsu_aba_1/3"/>
</dbReference>
<dbReference type="InterPro" id="IPR001030">
    <property type="entry name" value="Acoase/IPM_deHydtase_lsu_aba"/>
</dbReference>
<dbReference type="InterPro" id="IPR018136">
    <property type="entry name" value="Aconitase_4Fe-4S_BS"/>
</dbReference>
<dbReference type="InterPro" id="IPR036008">
    <property type="entry name" value="Aconitase_4Fe-4S_dom"/>
</dbReference>
<dbReference type="InterPro" id="IPR050067">
    <property type="entry name" value="IPM_dehydratase_rel_enz"/>
</dbReference>
<dbReference type="InterPro" id="IPR033941">
    <property type="entry name" value="IPMI_cat"/>
</dbReference>
<dbReference type="NCBIfam" id="TIGR00170">
    <property type="entry name" value="leuC"/>
    <property type="match status" value="1"/>
</dbReference>
<dbReference type="NCBIfam" id="NF004016">
    <property type="entry name" value="PRK05478.1"/>
    <property type="match status" value="1"/>
</dbReference>
<dbReference type="NCBIfam" id="NF009116">
    <property type="entry name" value="PRK12466.1"/>
    <property type="match status" value="1"/>
</dbReference>
<dbReference type="PANTHER" id="PTHR43822:SF9">
    <property type="entry name" value="3-ISOPROPYLMALATE DEHYDRATASE"/>
    <property type="match status" value="1"/>
</dbReference>
<dbReference type="PANTHER" id="PTHR43822">
    <property type="entry name" value="HOMOACONITASE, MITOCHONDRIAL-RELATED"/>
    <property type="match status" value="1"/>
</dbReference>
<dbReference type="Pfam" id="PF00330">
    <property type="entry name" value="Aconitase"/>
    <property type="match status" value="1"/>
</dbReference>
<dbReference type="PRINTS" id="PR00415">
    <property type="entry name" value="ACONITASE"/>
</dbReference>
<dbReference type="SUPFAM" id="SSF53732">
    <property type="entry name" value="Aconitase iron-sulfur domain"/>
    <property type="match status" value="1"/>
</dbReference>
<dbReference type="PROSITE" id="PS00450">
    <property type="entry name" value="ACONITASE_1"/>
    <property type="match status" value="1"/>
</dbReference>
<dbReference type="PROSITE" id="PS01244">
    <property type="entry name" value="ACONITASE_2"/>
    <property type="match status" value="1"/>
</dbReference>
<reference key="1">
    <citation type="journal article" date="2006" name="Mol. Microbiol.">
        <title>Role of pathogenicity island-associated integrases in the genome plasticity of uropathogenic Escherichia coli strain 536.</title>
        <authorList>
            <person name="Hochhut B."/>
            <person name="Wilde C."/>
            <person name="Balling G."/>
            <person name="Middendorf B."/>
            <person name="Dobrindt U."/>
            <person name="Brzuszkiewicz E."/>
            <person name="Gottschalk G."/>
            <person name="Carniel E."/>
            <person name="Hacker J."/>
        </authorList>
    </citation>
    <scope>NUCLEOTIDE SEQUENCE [LARGE SCALE GENOMIC DNA]</scope>
    <source>
        <strain>536 / UPEC</strain>
    </source>
</reference>
<name>LEUC_ECOL5</name>
<evidence type="ECO:0000255" key="1">
    <source>
        <dbReference type="HAMAP-Rule" id="MF_01026"/>
    </source>
</evidence>